<dbReference type="EC" id="7.1.2.2" evidence="2"/>
<dbReference type="EMBL" id="CP000551">
    <property type="protein sequence ID" value="ABM70936.1"/>
    <property type="molecule type" value="Genomic_DNA"/>
</dbReference>
<dbReference type="RefSeq" id="WP_011819066.1">
    <property type="nucleotide sequence ID" value="NC_008816.1"/>
</dbReference>
<dbReference type="SMR" id="A2BT25"/>
<dbReference type="STRING" id="146891.A9601_16531"/>
<dbReference type="KEGG" id="pmb:A9601_16531"/>
<dbReference type="eggNOG" id="COG0056">
    <property type="taxonomic scope" value="Bacteria"/>
</dbReference>
<dbReference type="HOGENOM" id="CLU_010091_2_1_3"/>
<dbReference type="OrthoDB" id="9803053at2"/>
<dbReference type="Proteomes" id="UP000002590">
    <property type="component" value="Chromosome"/>
</dbReference>
<dbReference type="GO" id="GO:0031676">
    <property type="term" value="C:plasma membrane-derived thylakoid membrane"/>
    <property type="evidence" value="ECO:0007669"/>
    <property type="project" value="UniProtKB-SubCell"/>
</dbReference>
<dbReference type="GO" id="GO:0045259">
    <property type="term" value="C:proton-transporting ATP synthase complex"/>
    <property type="evidence" value="ECO:0007669"/>
    <property type="project" value="UniProtKB-KW"/>
</dbReference>
<dbReference type="GO" id="GO:0043531">
    <property type="term" value="F:ADP binding"/>
    <property type="evidence" value="ECO:0007669"/>
    <property type="project" value="TreeGrafter"/>
</dbReference>
<dbReference type="GO" id="GO:0005524">
    <property type="term" value="F:ATP binding"/>
    <property type="evidence" value="ECO:0007669"/>
    <property type="project" value="UniProtKB-UniRule"/>
</dbReference>
<dbReference type="GO" id="GO:0046933">
    <property type="term" value="F:proton-transporting ATP synthase activity, rotational mechanism"/>
    <property type="evidence" value="ECO:0007669"/>
    <property type="project" value="UniProtKB-UniRule"/>
</dbReference>
<dbReference type="CDD" id="cd18113">
    <property type="entry name" value="ATP-synt_F1_alpha_C"/>
    <property type="match status" value="1"/>
</dbReference>
<dbReference type="CDD" id="cd18116">
    <property type="entry name" value="ATP-synt_F1_alpha_N"/>
    <property type="match status" value="1"/>
</dbReference>
<dbReference type="CDD" id="cd01132">
    <property type="entry name" value="F1-ATPase_alpha_CD"/>
    <property type="match status" value="1"/>
</dbReference>
<dbReference type="FunFam" id="1.20.150.20:FF:000001">
    <property type="entry name" value="ATP synthase subunit alpha"/>
    <property type="match status" value="1"/>
</dbReference>
<dbReference type="FunFam" id="2.40.30.20:FF:000001">
    <property type="entry name" value="ATP synthase subunit alpha"/>
    <property type="match status" value="1"/>
</dbReference>
<dbReference type="FunFam" id="3.40.50.300:FF:000002">
    <property type="entry name" value="ATP synthase subunit alpha"/>
    <property type="match status" value="1"/>
</dbReference>
<dbReference type="Gene3D" id="2.40.30.20">
    <property type="match status" value="1"/>
</dbReference>
<dbReference type="Gene3D" id="1.20.150.20">
    <property type="entry name" value="ATP synthase alpha/beta chain, C-terminal domain"/>
    <property type="match status" value="1"/>
</dbReference>
<dbReference type="Gene3D" id="3.40.50.300">
    <property type="entry name" value="P-loop containing nucleotide triphosphate hydrolases"/>
    <property type="match status" value="1"/>
</dbReference>
<dbReference type="HAMAP" id="MF_01346">
    <property type="entry name" value="ATP_synth_alpha_bact"/>
    <property type="match status" value="1"/>
</dbReference>
<dbReference type="InterPro" id="IPR023366">
    <property type="entry name" value="ATP_synth_asu-like_sf"/>
</dbReference>
<dbReference type="InterPro" id="IPR000793">
    <property type="entry name" value="ATP_synth_asu_C"/>
</dbReference>
<dbReference type="InterPro" id="IPR038376">
    <property type="entry name" value="ATP_synth_asu_C_sf"/>
</dbReference>
<dbReference type="InterPro" id="IPR033732">
    <property type="entry name" value="ATP_synth_F1_a_nt-bd_dom"/>
</dbReference>
<dbReference type="InterPro" id="IPR005294">
    <property type="entry name" value="ATP_synth_F1_asu"/>
</dbReference>
<dbReference type="InterPro" id="IPR020003">
    <property type="entry name" value="ATPase_a/bsu_AS"/>
</dbReference>
<dbReference type="InterPro" id="IPR004100">
    <property type="entry name" value="ATPase_F1/V1/A1_a/bsu_N"/>
</dbReference>
<dbReference type="InterPro" id="IPR036121">
    <property type="entry name" value="ATPase_F1/V1/A1_a/bsu_N_sf"/>
</dbReference>
<dbReference type="InterPro" id="IPR000194">
    <property type="entry name" value="ATPase_F1/V1/A1_a/bsu_nucl-bd"/>
</dbReference>
<dbReference type="InterPro" id="IPR027417">
    <property type="entry name" value="P-loop_NTPase"/>
</dbReference>
<dbReference type="NCBIfam" id="TIGR00962">
    <property type="entry name" value="atpA"/>
    <property type="match status" value="1"/>
</dbReference>
<dbReference type="NCBIfam" id="NF009884">
    <property type="entry name" value="PRK13343.1"/>
    <property type="match status" value="1"/>
</dbReference>
<dbReference type="PANTHER" id="PTHR48082">
    <property type="entry name" value="ATP SYNTHASE SUBUNIT ALPHA, MITOCHONDRIAL"/>
    <property type="match status" value="1"/>
</dbReference>
<dbReference type="PANTHER" id="PTHR48082:SF2">
    <property type="entry name" value="ATP SYNTHASE SUBUNIT ALPHA, MITOCHONDRIAL"/>
    <property type="match status" value="1"/>
</dbReference>
<dbReference type="Pfam" id="PF00006">
    <property type="entry name" value="ATP-synt_ab"/>
    <property type="match status" value="1"/>
</dbReference>
<dbReference type="Pfam" id="PF00306">
    <property type="entry name" value="ATP-synt_ab_C"/>
    <property type="match status" value="1"/>
</dbReference>
<dbReference type="Pfam" id="PF02874">
    <property type="entry name" value="ATP-synt_ab_N"/>
    <property type="match status" value="1"/>
</dbReference>
<dbReference type="PIRSF" id="PIRSF039088">
    <property type="entry name" value="F_ATPase_subunit_alpha"/>
    <property type="match status" value="1"/>
</dbReference>
<dbReference type="SUPFAM" id="SSF47917">
    <property type="entry name" value="C-terminal domain of alpha and beta subunits of F1 ATP synthase"/>
    <property type="match status" value="1"/>
</dbReference>
<dbReference type="SUPFAM" id="SSF50615">
    <property type="entry name" value="N-terminal domain of alpha and beta subunits of F1 ATP synthase"/>
    <property type="match status" value="1"/>
</dbReference>
<dbReference type="SUPFAM" id="SSF52540">
    <property type="entry name" value="P-loop containing nucleoside triphosphate hydrolases"/>
    <property type="match status" value="1"/>
</dbReference>
<dbReference type="PROSITE" id="PS00152">
    <property type="entry name" value="ATPASE_ALPHA_BETA"/>
    <property type="match status" value="1"/>
</dbReference>
<protein>
    <recommendedName>
        <fullName evidence="2">ATP synthase subunit alpha</fullName>
        <ecNumber evidence="2">7.1.2.2</ecNumber>
    </recommendedName>
    <alternativeName>
        <fullName evidence="2">ATP synthase F1 sector subunit alpha</fullName>
    </alternativeName>
    <alternativeName>
        <fullName evidence="2">F-ATPase subunit alpha</fullName>
    </alternativeName>
</protein>
<sequence length="505" mass="54292">MVSIRPDEISSILKQQITDYDQSVSVSNVGTVLQIGDGIARIYGLDQVMAGELLEFEDGTEGIALNLEDDNVGAVLMGEALGVQEGSNVKSTGKIASVPVGEAMQGRVVNPLGQPIDGKGEIPTSDTRLIEEMAPGIIKRRSVHEPMQTGITSIDAMIPVGRGQRELIIGDRQTGKSAIAIDTIINQKGQDVVCVYVAIGQKSASVANIVEVLRERGALDYTVVVSAGASEPAALQYLAPYTGAAIAEHFMYQGKATLVIYDDLTKQAQAYRQMSLLLKRPPGREAYPGDVFYLHSRLLERAAKLSDAMGGGSMTALPIIETQAGDVSAYIPTNVISITDGQIFLSADLFNSGLRPAINVGISVSRVGGAAQTKAIKKIAGTLKLELAQFDELAAFSQFASDLDEATQQQLERGKRLRELLKQPQFSPLNLAEQVAVVYAGVKGLIDEVPVEDVTKFATELREYLKLNKSEFIEEILKEKKLNDGLEATLKEVINEVKSSMLATV</sequence>
<gene>
    <name evidence="2" type="primary">atpA</name>
    <name type="ordered locus">A9601_16531</name>
</gene>
<comment type="function">
    <text evidence="2">Produces ATP from ADP in the presence of a proton gradient across the membrane. The alpha chain is a regulatory subunit.</text>
</comment>
<comment type="catalytic activity">
    <reaction evidence="2">
        <text>ATP + H2O + 4 H(+)(in) = ADP + phosphate + 5 H(+)(out)</text>
        <dbReference type="Rhea" id="RHEA:57720"/>
        <dbReference type="ChEBI" id="CHEBI:15377"/>
        <dbReference type="ChEBI" id="CHEBI:15378"/>
        <dbReference type="ChEBI" id="CHEBI:30616"/>
        <dbReference type="ChEBI" id="CHEBI:43474"/>
        <dbReference type="ChEBI" id="CHEBI:456216"/>
        <dbReference type="EC" id="7.1.2.2"/>
    </reaction>
</comment>
<comment type="subunit">
    <text evidence="1">F-type ATPases have 2 components, CF(1) - the catalytic core - and CF(0) - the membrane proton channel. CF(1) has five subunits: alpha(3), beta(3), gamma(1), delta(1), epsilon(1). CF(0) has four main subunits: a(1), b(1), b'(1) and c(9-12) (By similarity).</text>
</comment>
<comment type="subcellular location">
    <subcellularLocation>
        <location evidence="2">Cellular thylakoid membrane</location>
        <topology evidence="2">Peripheral membrane protein</topology>
    </subcellularLocation>
</comment>
<comment type="similarity">
    <text evidence="2">Belongs to the ATPase alpha/beta chains family.</text>
</comment>
<organism>
    <name type="scientific">Prochlorococcus marinus (strain AS9601)</name>
    <dbReference type="NCBI Taxonomy" id="146891"/>
    <lineage>
        <taxon>Bacteria</taxon>
        <taxon>Bacillati</taxon>
        <taxon>Cyanobacteriota</taxon>
        <taxon>Cyanophyceae</taxon>
        <taxon>Synechococcales</taxon>
        <taxon>Prochlorococcaceae</taxon>
        <taxon>Prochlorococcus</taxon>
    </lineage>
</organism>
<name>ATPA_PROMS</name>
<reference key="1">
    <citation type="journal article" date="2007" name="PLoS Genet.">
        <title>Patterns and implications of gene gain and loss in the evolution of Prochlorococcus.</title>
        <authorList>
            <person name="Kettler G.C."/>
            <person name="Martiny A.C."/>
            <person name="Huang K."/>
            <person name="Zucker J."/>
            <person name="Coleman M.L."/>
            <person name="Rodrigue S."/>
            <person name="Chen F."/>
            <person name="Lapidus A."/>
            <person name="Ferriera S."/>
            <person name="Johnson J."/>
            <person name="Steglich C."/>
            <person name="Church G.M."/>
            <person name="Richardson P."/>
            <person name="Chisholm S.W."/>
        </authorList>
    </citation>
    <scope>NUCLEOTIDE SEQUENCE [LARGE SCALE GENOMIC DNA]</scope>
    <source>
        <strain>AS9601</strain>
    </source>
</reference>
<feature type="chain" id="PRO_0000302684" description="ATP synthase subunit alpha">
    <location>
        <begin position="1"/>
        <end position="505"/>
    </location>
</feature>
<feature type="binding site" evidence="2">
    <location>
        <begin position="170"/>
        <end position="177"/>
    </location>
    <ligand>
        <name>ATP</name>
        <dbReference type="ChEBI" id="CHEBI:30616"/>
    </ligand>
</feature>
<feature type="site" description="Required for activity" evidence="2">
    <location>
        <position position="363"/>
    </location>
</feature>
<evidence type="ECO:0000250" key="1"/>
<evidence type="ECO:0000255" key="2">
    <source>
        <dbReference type="HAMAP-Rule" id="MF_01346"/>
    </source>
</evidence>
<accession>A2BT25</accession>
<keyword id="KW-0066">ATP synthesis</keyword>
<keyword id="KW-0067">ATP-binding</keyword>
<keyword id="KW-0139">CF(1)</keyword>
<keyword id="KW-0375">Hydrogen ion transport</keyword>
<keyword id="KW-0406">Ion transport</keyword>
<keyword id="KW-0472">Membrane</keyword>
<keyword id="KW-0547">Nucleotide-binding</keyword>
<keyword id="KW-0793">Thylakoid</keyword>
<keyword id="KW-1278">Translocase</keyword>
<keyword id="KW-0813">Transport</keyword>
<proteinExistence type="inferred from homology"/>